<reference key="1">
    <citation type="journal article" date="2005" name="Science">
        <title>Genome streamlining in a cosmopolitan oceanic bacterium.</title>
        <authorList>
            <person name="Giovannoni S.J."/>
            <person name="Tripp H.J."/>
            <person name="Givan S."/>
            <person name="Podar M."/>
            <person name="Vergin K.L."/>
            <person name="Baptista D."/>
            <person name="Bibbs L."/>
            <person name="Eads J."/>
            <person name="Richardson T.H."/>
            <person name="Noordewier M."/>
            <person name="Rappe M.S."/>
            <person name="Short J.M."/>
            <person name="Carrington J.C."/>
            <person name="Mathur E.J."/>
        </authorList>
    </citation>
    <scope>NUCLEOTIDE SEQUENCE [LARGE SCALE GENOMIC DNA]</scope>
    <source>
        <strain>HTCC1062</strain>
    </source>
</reference>
<accession>Q4FM05</accession>
<gene>
    <name evidence="1" type="primary">tatA</name>
    <name type="ordered locus">SAR11_0975</name>
</gene>
<sequence length="66" mass="7191">MSIGIWQIAIVVILVVLLFGRGKISSLMGDVAKGIKSFKKGMATDITDEPEPKNVSENNQDSKDKE</sequence>
<comment type="function">
    <text evidence="1">Part of the twin-arginine translocation (Tat) system that transports large folded proteins containing a characteristic twin-arginine motif in their signal peptide across membranes. TatA could form the protein-conducting channel of the Tat system.</text>
</comment>
<comment type="subunit">
    <text evidence="1">The Tat system comprises two distinct complexes: a TatABC complex, containing multiple copies of TatA, TatB and TatC subunits, and a separate TatA complex, containing only TatA subunits. Substrates initially bind to the TatABC complex, which probably triggers association of the separate TatA complex to form the active translocon.</text>
</comment>
<comment type="subcellular location">
    <subcellularLocation>
        <location evidence="1">Cell inner membrane</location>
        <topology evidence="1">Single-pass membrane protein</topology>
    </subcellularLocation>
</comment>
<comment type="similarity">
    <text evidence="1">Belongs to the TatA/E family.</text>
</comment>
<keyword id="KW-0997">Cell inner membrane</keyword>
<keyword id="KW-1003">Cell membrane</keyword>
<keyword id="KW-0472">Membrane</keyword>
<keyword id="KW-0653">Protein transport</keyword>
<keyword id="KW-1185">Reference proteome</keyword>
<keyword id="KW-0811">Translocation</keyword>
<keyword id="KW-0812">Transmembrane</keyword>
<keyword id="KW-1133">Transmembrane helix</keyword>
<keyword id="KW-0813">Transport</keyword>
<proteinExistence type="inferred from homology"/>
<name>TATA_PELUB</name>
<evidence type="ECO:0000255" key="1">
    <source>
        <dbReference type="HAMAP-Rule" id="MF_00236"/>
    </source>
</evidence>
<evidence type="ECO:0000256" key="2">
    <source>
        <dbReference type="SAM" id="MobiDB-lite"/>
    </source>
</evidence>
<feature type="chain" id="PRO_1000197889" description="Sec-independent protein translocase protein TatA">
    <location>
        <begin position="1"/>
        <end position="66"/>
    </location>
</feature>
<feature type="transmembrane region" description="Helical" evidence="1">
    <location>
        <begin position="1"/>
        <end position="21"/>
    </location>
</feature>
<feature type="region of interest" description="Disordered" evidence="2">
    <location>
        <begin position="43"/>
        <end position="66"/>
    </location>
</feature>
<feature type="compositionally biased region" description="Basic and acidic residues" evidence="2">
    <location>
        <begin position="50"/>
        <end position="66"/>
    </location>
</feature>
<protein>
    <recommendedName>
        <fullName evidence="1">Sec-independent protein translocase protein TatA</fullName>
    </recommendedName>
</protein>
<dbReference type="EMBL" id="CP000084">
    <property type="protein sequence ID" value="AAZ21783.1"/>
    <property type="molecule type" value="Genomic_DNA"/>
</dbReference>
<dbReference type="RefSeq" id="WP_006996943.1">
    <property type="nucleotide sequence ID" value="NC_007205.1"/>
</dbReference>
<dbReference type="SMR" id="Q4FM05"/>
<dbReference type="STRING" id="335992.SAR11_0975"/>
<dbReference type="GeneID" id="66295465"/>
<dbReference type="KEGG" id="pub:SAR11_0975"/>
<dbReference type="eggNOG" id="COG1826">
    <property type="taxonomic scope" value="Bacteria"/>
</dbReference>
<dbReference type="HOGENOM" id="CLU_086034_5_0_5"/>
<dbReference type="OrthoDB" id="7161179at2"/>
<dbReference type="Proteomes" id="UP000002528">
    <property type="component" value="Chromosome"/>
</dbReference>
<dbReference type="GO" id="GO:0033281">
    <property type="term" value="C:TAT protein transport complex"/>
    <property type="evidence" value="ECO:0007669"/>
    <property type="project" value="UniProtKB-UniRule"/>
</dbReference>
<dbReference type="GO" id="GO:0008320">
    <property type="term" value="F:protein transmembrane transporter activity"/>
    <property type="evidence" value="ECO:0007669"/>
    <property type="project" value="UniProtKB-UniRule"/>
</dbReference>
<dbReference type="GO" id="GO:0043953">
    <property type="term" value="P:protein transport by the Tat complex"/>
    <property type="evidence" value="ECO:0007669"/>
    <property type="project" value="UniProtKB-UniRule"/>
</dbReference>
<dbReference type="Gene3D" id="1.20.5.3310">
    <property type="match status" value="1"/>
</dbReference>
<dbReference type="HAMAP" id="MF_00236">
    <property type="entry name" value="TatA_E"/>
    <property type="match status" value="1"/>
</dbReference>
<dbReference type="InterPro" id="IPR003369">
    <property type="entry name" value="TatA/B/E"/>
</dbReference>
<dbReference type="InterPro" id="IPR006312">
    <property type="entry name" value="TatA/E"/>
</dbReference>
<dbReference type="NCBIfam" id="TIGR01411">
    <property type="entry name" value="tatAE"/>
    <property type="match status" value="1"/>
</dbReference>
<dbReference type="PANTHER" id="PTHR42982">
    <property type="entry name" value="SEC-INDEPENDENT PROTEIN TRANSLOCASE PROTEIN TATA"/>
    <property type="match status" value="1"/>
</dbReference>
<dbReference type="PANTHER" id="PTHR42982:SF1">
    <property type="entry name" value="SEC-INDEPENDENT PROTEIN TRANSLOCASE PROTEIN TATA"/>
    <property type="match status" value="1"/>
</dbReference>
<dbReference type="Pfam" id="PF02416">
    <property type="entry name" value="TatA_B_E"/>
    <property type="match status" value="1"/>
</dbReference>
<organism>
    <name type="scientific">Pelagibacter ubique (strain HTCC1062)</name>
    <dbReference type="NCBI Taxonomy" id="335992"/>
    <lineage>
        <taxon>Bacteria</taxon>
        <taxon>Pseudomonadati</taxon>
        <taxon>Pseudomonadota</taxon>
        <taxon>Alphaproteobacteria</taxon>
        <taxon>Candidatus Pelagibacterales</taxon>
        <taxon>Candidatus Pelagibacteraceae</taxon>
        <taxon>Candidatus Pelagibacter</taxon>
    </lineage>
</organism>